<protein>
    <recommendedName>
        <fullName>Zinc transporter SLC39A7</fullName>
    </recommendedName>
    <alternativeName>
        <fullName>Histidine-rich membrane protein Ke4</fullName>
    </alternativeName>
    <alternativeName>
        <fullName>Solute carrier family 39 member 7</fullName>
    </alternativeName>
    <alternativeName>
        <fullName>Zrt-, Irt-like protein 7</fullName>
        <shortName>ZIP7</shortName>
    </alternativeName>
</protein>
<name>S39A7_PIG</name>
<proteinExistence type="evidence at transcript level"/>
<dbReference type="EMBL" id="F14787">
    <property type="protein sequence ID" value="CAA23256.1"/>
    <property type="molecule type" value="mRNA"/>
</dbReference>
<dbReference type="EMBL" id="AF146397">
    <property type="protein sequence ID" value="AAD44801.1"/>
    <property type="molecule type" value="Genomic_DNA"/>
</dbReference>
<dbReference type="EMBL" id="AEMK02000055">
    <property type="status" value="NOT_ANNOTATED_CDS"/>
    <property type="molecule type" value="Genomic_DNA"/>
</dbReference>
<dbReference type="FunCoup" id="Q29175">
    <property type="interactions" value="1380"/>
</dbReference>
<dbReference type="STRING" id="9823.ENSSSCP00000014066"/>
<dbReference type="Ensembl" id="ENSSSCT00090028548">
    <property type="protein sequence ID" value="ENSSSCP00090017615"/>
    <property type="gene ID" value="ENSSSCG00090016215"/>
</dbReference>
<dbReference type="HOGENOM" id="CLU_015114_0_1_1"/>
<dbReference type="InParanoid" id="Q29175"/>
<dbReference type="TreeFam" id="TF318470"/>
<dbReference type="Reactome" id="R-SSC-442380">
    <property type="pathway name" value="Zinc influx into cells by the SLC39 gene family"/>
</dbReference>
<dbReference type="Proteomes" id="UP000008227">
    <property type="component" value="Chromosome 7"/>
</dbReference>
<dbReference type="Proteomes" id="UP000314985">
    <property type="component" value="Unplaced"/>
</dbReference>
<dbReference type="Proteomes" id="UP000694570">
    <property type="component" value="Unplaced"/>
</dbReference>
<dbReference type="Proteomes" id="UP000694571">
    <property type="component" value="Unplaced"/>
</dbReference>
<dbReference type="Proteomes" id="UP000694720">
    <property type="component" value="Unplaced"/>
</dbReference>
<dbReference type="Proteomes" id="UP000694722">
    <property type="component" value="Unplaced"/>
</dbReference>
<dbReference type="Proteomes" id="UP000694723">
    <property type="component" value="Unplaced"/>
</dbReference>
<dbReference type="Proteomes" id="UP000694724">
    <property type="component" value="Unplaced"/>
</dbReference>
<dbReference type="Proteomes" id="UP000694725">
    <property type="component" value="Unplaced"/>
</dbReference>
<dbReference type="Proteomes" id="UP000694726">
    <property type="component" value="Unplaced"/>
</dbReference>
<dbReference type="Proteomes" id="UP000694727">
    <property type="component" value="Unplaced"/>
</dbReference>
<dbReference type="Proteomes" id="UP000694728">
    <property type="component" value="Unplaced"/>
</dbReference>
<dbReference type="Bgee" id="ENSSSCG00000001475">
    <property type="expression patterns" value="Expressed in granulosa cell and 43 other cell types or tissues"/>
</dbReference>
<dbReference type="GO" id="GO:0005789">
    <property type="term" value="C:endoplasmic reticulum membrane"/>
    <property type="evidence" value="ECO:0007669"/>
    <property type="project" value="UniProtKB-SubCell"/>
</dbReference>
<dbReference type="GO" id="GO:0005794">
    <property type="term" value="C:Golgi apparatus"/>
    <property type="evidence" value="ECO:0007669"/>
    <property type="project" value="UniProtKB-SubCell"/>
</dbReference>
<dbReference type="GO" id="GO:0005385">
    <property type="term" value="F:zinc ion transmembrane transporter activity"/>
    <property type="evidence" value="ECO:0000250"/>
    <property type="project" value="UniProtKB"/>
</dbReference>
<dbReference type="GO" id="GO:0030183">
    <property type="term" value="P:B cell differentiation"/>
    <property type="evidence" value="ECO:0000250"/>
    <property type="project" value="UniProtKB"/>
</dbReference>
<dbReference type="GO" id="GO:0006882">
    <property type="term" value="P:intracellular zinc ion homeostasis"/>
    <property type="evidence" value="ECO:0000250"/>
    <property type="project" value="UniProtKB"/>
</dbReference>
<dbReference type="GO" id="GO:0110075">
    <property type="term" value="P:regulation of ferroptosis"/>
    <property type="evidence" value="ECO:0000250"/>
    <property type="project" value="UniProtKB"/>
</dbReference>
<dbReference type="GO" id="GO:0098773">
    <property type="term" value="P:skin epidermis development"/>
    <property type="evidence" value="ECO:0000250"/>
    <property type="project" value="UniProtKB"/>
</dbReference>
<dbReference type="GO" id="GO:0071577">
    <property type="term" value="P:zinc ion transmembrane transport"/>
    <property type="evidence" value="ECO:0000318"/>
    <property type="project" value="GO_Central"/>
</dbReference>
<dbReference type="InterPro" id="IPR003689">
    <property type="entry name" value="ZIP"/>
</dbReference>
<dbReference type="PANTHER" id="PTHR16950:SF25">
    <property type="entry name" value="ZINC TRANSPORTER SLC39A7"/>
    <property type="match status" value="1"/>
</dbReference>
<dbReference type="PANTHER" id="PTHR16950">
    <property type="entry name" value="ZINC TRANSPORTER SLC39A7 HISTIDINE-RICH MEMBRANE PROTEIN KE4"/>
    <property type="match status" value="1"/>
</dbReference>
<dbReference type="Pfam" id="PF02535">
    <property type="entry name" value="Zip"/>
    <property type="match status" value="1"/>
</dbReference>
<feature type="chain" id="PRO_0000213690" description="Zinc transporter SLC39A7">
    <location>
        <begin position="1"/>
        <end position="473"/>
    </location>
</feature>
<feature type="transmembrane region" description="Helical" evidence="3">
    <location>
        <begin position="11"/>
        <end position="31"/>
    </location>
</feature>
<feature type="transmembrane region" description="Helical" evidence="3">
    <location>
        <begin position="138"/>
        <end position="158"/>
    </location>
</feature>
<feature type="transmembrane region" description="Helical" evidence="3">
    <location>
        <begin position="169"/>
        <end position="189"/>
    </location>
</feature>
<feature type="transmembrane region" description="Helical" evidence="3">
    <location>
        <begin position="214"/>
        <end position="234"/>
    </location>
</feature>
<feature type="transmembrane region" description="Helical" evidence="3">
    <location>
        <begin position="388"/>
        <end position="408"/>
    </location>
</feature>
<feature type="region of interest" description="Disordered" evidence="4">
    <location>
        <begin position="44"/>
        <end position="120"/>
    </location>
</feature>
<feature type="region of interest" description="Disordered" evidence="4">
    <location>
        <begin position="243"/>
        <end position="316"/>
    </location>
</feature>
<feature type="region of interest" description="Disordered" evidence="4">
    <location>
        <begin position="428"/>
        <end position="473"/>
    </location>
</feature>
<feature type="compositionally biased region" description="Basic and acidic residues" evidence="4">
    <location>
        <begin position="44"/>
        <end position="56"/>
    </location>
</feature>
<feature type="compositionally biased region" description="Basic and acidic residues" evidence="4">
    <location>
        <begin position="66"/>
        <end position="114"/>
    </location>
</feature>
<feature type="compositionally biased region" description="Basic and acidic residues" evidence="4">
    <location>
        <begin position="298"/>
        <end position="316"/>
    </location>
</feature>
<feature type="compositionally biased region" description="Polar residues" evidence="4">
    <location>
        <begin position="431"/>
        <end position="442"/>
    </location>
</feature>
<feature type="compositionally biased region" description="Basic and acidic residues" evidence="4">
    <location>
        <begin position="452"/>
        <end position="462"/>
    </location>
</feature>
<feature type="compositionally biased region" description="Polar residues" evidence="4">
    <location>
        <begin position="463"/>
        <end position="473"/>
    </location>
</feature>
<feature type="modified residue" description="Pros-methylhistidine" evidence="1">
    <location>
        <position position="66"/>
    </location>
</feature>
<feature type="modified residue" description="Phosphoserine" evidence="2">
    <location>
        <position position="278"/>
    </location>
</feature>
<feature type="modified residue" description="Phosphoserine" evidence="2">
    <location>
        <position position="279"/>
    </location>
</feature>
<feature type="sequence conflict" description="In Ref. 1; CAA23256." evidence="5" ref="1">
    <original>G</original>
    <variation>R</variation>
    <location>
        <position position="205"/>
    </location>
</feature>
<feature type="sequence conflict" description="In Ref. 1; CAA23256." evidence="5" ref="1">
    <original>E</original>
    <variation>G</variation>
    <location>
        <position position="245"/>
    </location>
</feature>
<feature type="sequence conflict" description="In Ref. 1; CAA23256." evidence="5" ref="1">
    <original>HTHGGDSPFEDILVECP</original>
    <variation>TRMEVMAWKTGVS</variation>
    <location>
        <begin position="256"/>
        <end position="272"/>
    </location>
</feature>
<feature type="sequence conflict" description="In Ref. 1; CAA23256." evidence="5" ref="1">
    <original>AGSDLRVSGY</original>
    <variation>QGQTCVCQGI</variation>
    <location>
        <begin position="314"/>
        <end position="323"/>
    </location>
</feature>
<keyword id="KW-0256">Endoplasmic reticulum</keyword>
<keyword id="KW-0333">Golgi apparatus</keyword>
<keyword id="KW-0406">Ion transport</keyword>
<keyword id="KW-0472">Membrane</keyword>
<keyword id="KW-0488">Methylation</keyword>
<keyword id="KW-0597">Phosphoprotein</keyword>
<keyword id="KW-1185">Reference proteome</keyword>
<keyword id="KW-0812">Transmembrane</keyword>
<keyword id="KW-1133">Transmembrane helix</keyword>
<keyword id="KW-0813">Transport</keyword>
<keyword id="KW-0862">Zinc</keyword>
<keyword id="KW-0864">Zinc transport</keyword>
<sequence length="473" mass="50148">MARGLGAPHRVAVGLLTWAALGLLVAGHGGHGDLYEDLQEDLHGHSHRHSHEDFHHGHSHAHGHGHTHESIWHGHTHGHDHGHSHEDLHHGHIHGDSHESLYHPGHGHDHEHSHGGYGESGAPGIKQDLDTVTLWAYALGATVLISAAPFFVLFLIPVESNSPRHRSLLQILLSFASGGLLGDAFLHLIPHALEPHSHHPLEQPGHGHSHSGQGPILSVGLWVLSGIVAFLVVEKFVRHVKGGHEHSHGHGHAHGHTHGGDSPFEDILVECPSKEKQSSEEEEKEAGASRKRRGGSTRPKDGPVRPQHSGEEKAGSDLRVSGYLNLAADLAHNFTDGLAIGASFRGGRGLGILTTMTVLLHEVPHEVGDFAILVQSGCSKKQAMRLQLLTAVGALAGTAFALLTEGGAAGSEVAGGTGPGWVLPFTAGDQAATQASPRSTSLPPVGEEDFREDPGPRQKGQQEKSGINVNCVS</sequence>
<reference key="1">
    <citation type="journal article" date="1996" name="Mamm. Genome">
        <title>Evaluation and characterization of a porcine small intestine cDNA library: analysis of 839 clones.</title>
        <authorList>
            <person name="Winteroe A.K."/>
            <person name="Fredholm M."/>
            <person name="Davies W."/>
        </authorList>
    </citation>
    <scope>NUCLEOTIDE SEQUENCE [LARGE SCALE MRNA] OF 196-351</scope>
    <source>
        <tissue>Small intestine</tissue>
    </source>
</reference>
<reference key="2">
    <citation type="submission" date="1999-04" db="EMBL/GenBank/DDBJ databases">
        <title>Physical organization of the swine major histocompatibility complex class II region.</title>
        <authorList>
            <person name="Chardon P."/>
            <person name="Rogel-Gaillard C."/>
            <person name="Peelman L.J."/>
            <person name="Yerle M."/>
            <person name="Renard C."/>
            <person name="Vaiman M."/>
        </authorList>
    </citation>
    <scope>NUCLEOTIDE SEQUENCE [GENOMIC DNA] OF 352-382</scope>
    <source>
        <strain>Belgian Landrace</strain>
    </source>
</reference>
<reference key="3">
    <citation type="submission" date="2022-08" db="EMBL/GenBank/DDBJ databases">
        <authorList>
            <consortium name="Porcine genome sequencing project"/>
        </authorList>
    </citation>
    <scope>NUCLEOTIDE SEQUENCE [LARGE SCALE GENOMIC DNA]</scope>
</reference>
<organism>
    <name type="scientific">Sus scrofa</name>
    <name type="common">Pig</name>
    <dbReference type="NCBI Taxonomy" id="9823"/>
    <lineage>
        <taxon>Eukaryota</taxon>
        <taxon>Metazoa</taxon>
        <taxon>Chordata</taxon>
        <taxon>Craniata</taxon>
        <taxon>Vertebrata</taxon>
        <taxon>Euteleostomi</taxon>
        <taxon>Mammalia</taxon>
        <taxon>Eutheria</taxon>
        <taxon>Laurasiatheria</taxon>
        <taxon>Artiodactyla</taxon>
        <taxon>Suina</taxon>
        <taxon>Suidae</taxon>
        <taxon>Sus</taxon>
    </lineage>
</organism>
<gene>
    <name type="primary">SLC39A7</name>
    <name type="synonym">HKE4</name>
</gene>
<comment type="function">
    <text evidence="1 2">Transports Zn(2+) from the endoplasmic reticulum (ER)/Golgi apparatus to the cytosol, playing an essential role in the regulation of cytosolic zinc levels. Acts as a gatekeeper of zinc release from intracellular stores, requiring post-translational activation by phosphorylation on residues, resulting in activation of multiple downstream pathways leading to cell growth and proliferation. Has an essential role in B cell development and is required for proper B cell receptor signaling (By similarity). Plays an important role in maintaining intestinal epithelial homeostasis and skin dermis development by regulating ER function. Controls cell signaling pathways involved in glucose metabolism in skeletal muscle (By similarity). Has a protective role against ER stress in different biological contexts. Mediates Zn(2+)-induced ferroptosis (By similarity).</text>
</comment>
<comment type="catalytic activity">
    <reaction evidence="2">
        <text>Zn(2+)(in) = Zn(2+)(out)</text>
        <dbReference type="Rhea" id="RHEA:29351"/>
        <dbReference type="ChEBI" id="CHEBI:29105"/>
    </reaction>
</comment>
<comment type="subunit">
    <text evidence="2">Homodimer.</text>
</comment>
<comment type="subcellular location">
    <subcellularLocation>
        <location evidence="2">Endoplasmic reticulum membrane</location>
        <topology evidence="3">Multi-pass membrane protein</topology>
    </subcellularLocation>
    <subcellularLocation>
        <location evidence="2">Golgi apparatus</location>
        <location evidence="2">cis-Golgi network membrane</location>
        <topology evidence="3">Multi-pass membrane protein</topology>
    </subcellularLocation>
</comment>
<comment type="PTM">
    <text evidence="2">Methylation at some His residue by METTL9 leads to reduced zinc-binding.</text>
</comment>
<comment type="PTM">
    <text evidence="2">Rapidly phosphorylated by CK2 following Zn(2+) treatment. This phosphorylation is required for efficient cytosolic Zn(2+) release.</text>
</comment>
<comment type="similarity">
    <text evidence="5">Belongs to the ZIP transporter (TC 2.A.5) family. KE4/Catsup subfamily.</text>
</comment>
<accession>Q29175</accession>
<accession>F1RZW9</accession>
<accession>Q9XT01</accession>
<evidence type="ECO:0000250" key="1">
    <source>
        <dbReference type="UniProtKB" id="Q31125"/>
    </source>
</evidence>
<evidence type="ECO:0000250" key="2">
    <source>
        <dbReference type="UniProtKB" id="Q92504"/>
    </source>
</evidence>
<evidence type="ECO:0000255" key="3"/>
<evidence type="ECO:0000256" key="4">
    <source>
        <dbReference type="SAM" id="MobiDB-lite"/>
    </source>
</evidence>
<evidence type="ECO:0000305" key="5"/>